<sequence>MAASHSPFTRFVHGESFAGLLLVGTALIAFIWANSPWRETYFAAQHTHLALSLGDARLDLSLEHWVNDGLMAVFFLLVGLEIKRELLIGELSSRRRVALAVTAALGGMLVPAALYTALNVGGPGLSGWGVPMSTDIAFALGVLALLGSRVPLGLKVFLTALAIVDDLGAVLVIALFYTSGLNLTFLTLAALTWGAALYAGWRGAFSLKLYGVLGVLLWFFVLKSGLHATIAGVLLAFAVPIRRPDPADYLASLAEAAKPGRGEVVGARLRDLEDLLERAQSPLHRLEHALHPFVTFLVLPVFALTNAGVPVAAGGFGSVSLGVLLGLLLGKPLGVVGGAWLAVRMGMASLPRRVNWGHMVGSGLLAGIGFTMSLFVSNLAFDDSVLLTQAKLGVLLASVLAALLGAGWLLLGIRGQAPSGRDDVQVDLPR</sequence>
<evidence type="ECO:0000255" key="1">
    <source>
        <dbReference type="HAMAP-Rule" id="MF_01844"/>
    </source>
</evidence>
<geneLocation type="plasmid">
    <name>pDGEO01</name>
</geneLocation>
<accession>Q1J2Y8</accession>
<feature type="chain" id="PRO_0000334274" description="Na(+)/H(+) antiporter NhaA 2">
    <location>
        <begin position="1"/>
        <end position="430"/>
    </location>
</feature>
<feature type="transmembrane region" description="Helical" evidence="1">
    <location>
        <begin position="11"/>
        <end position="31"/>
    </location>
</feature>
<feature type="transmembrane region" description="Helical" evidence="1">
    <location>
        <begin position="60"/>
        <end position="80"/>
    </location>
</feature>
<feature type="transmembrane region" description="Helical" evidence="1">
    <location>
        <begin position="97"/>
        <end position="117"/>
    </location>
</feature>
<feature type="transmembrane region" description="Helical" evidence="1">
    <location>
        <begin position="127"/>
        <end position="147"/>
    </location>
</feature>
<feature type="transmembrane region" description="Helical" evidence="1">
    <location>
        <begin position="181"/>
        <end position="201"/>
    </location>
</feature>
<feature type="transmembrane region" description="Helical" evidence="1">
    <location>
        <begin position="215"/>
        <end position="235"/>
    </location>
</feature>
<feature type="transmembrane region" description="Helical" evidence="1">
    <location>
        <begin position="288"/>
        <end position="308"/>
    </location>
</feature>
<feature type="transmembrane region" description="Helical" evidence="1">
    <location>
        <begin position="309"/>
        <end position="329"/>
    </location>
</feature>
<feature type="transmembrane region" description="Helical" evidence="1">
    <location>
        <begin position="356"/>
        <end position="376"/>
    </location>
</feature>
<feature type="transmembrane region" description="Helical" evidence="1">
    <location>
        <begin position="393"/>
        <end position="413"/>
    </location>
</feature>
<proteinExistence type="inferred from homology"/>
<protein>
    <recommendedName>
        <fullName evidence="1">Na(+)/H(+) antiporter NhaA 2</fullName>
    </recommendedName>
    <alternativeName>
        <fullName evidence="1">Sodium/proton antiporter NhaA 2</fullName>
    </alternativeName>
</protein>
<reference key="1">
    <citation type="submission" date="2006-04" db="EMBL/GenBank/DDBJ databases">
        <title>Complete sequence of plasmid 1 of Deinococcus geothermalis DSM 11300.</title>
        <authorList>
            <person name="Copeland A."/>
            <person name="Lucas S."/>
            <person name="Lapidus A."/>
            <person name="Barry K."/>
            <person name="Detter J.C."/>
            <person name="Glavina del Rio T."/>
            <person name="Hammon N."/>
            <person name="Israni S."/>
            <person name="Dalin E."/>
            <person name="Tice H."/>
            <person name="Pitluck S."/>
            <person name="Brettin T."/>
            <person name="Bruce D."/>
            <person name="Han C."/>
            <person name="Tapia R."/>
            <person name="Saunders E."/>
            <person name="Gilna P."/>
            <person name="Schmutz J."/>
            <person name="Larimer F."/>
            <person name="Land M."/>
            <person name="Hauser L."/>
            <person name="Kyrpides N."/>
            <person name="Kim E."/>
            <person name="Daly M.J."/>
            <person name="Fredrickson J.K."/>
            <person name="Makarova K.S."/>
            <person name="Gaidamakova E.K."/>
            <person name="Zhai M."/>
            <person name="Richardson P."/>
        </authorList>
    </citation>
    <scope>NUCLEOTIDE SEQUENCE [LARGE SCALE GENOMIC DNA]</scope>
    <source>
        <strain>DSM 11300 / CIP 105573 / AG-3a</strain>
    </source>
</reference>
<organism>
    <name type="scientific">Deinococcus geothermalis (strain DSM 11300 / CIP 105573 / AG-3a)</name>
    <dbReference type="NCBI Taxonomy" id="319795"/>
    <lineage>
        <taxon>Bacteria</taxon>
        <taxon>Thermotogati</taxon>
        <taxon>Deinococcota</taxon>
        <taxon>Deinococci</taxon>
        <taxon>Deinococcales</taxon>
        <taxon>Deinococcaceae</taxon>
        <taxon>Deinococcus</taxon>
    </lineage>
</organism>
<dbReference type="EMBL" id="CP000358">
    <property type="protein sequence ID" value="ABF44146.1"/>
    <property type="molecule type" value="Genomic_DNA"/>
</dbReference>
<dbReference type="SMR" id="Q1J2Y8"/>
<dbReference type="KEGG" id="dge:Dgeo_2713"/>
<dbReference type="eggNOG" id="COG3004">
    <property type="taxonomic scope" value="Bacteria"/>
</dbReference>
<dbReference type="HOGENOM" id="CLU_015803_1_2_0"/>
<dbReference type="Proteomes" id="UP000002431">
    <property type="component" value="Plasmid pDGEO01"/>
</dbReference>
<dbReference type="GO" id="GO:0005886">
    <property type="term" value="C:plasma membrane"/>
    <property type="evidence" value="ECO:0007669"/>
    <property type="project" value="UniProtKB-SubCell"/>
</dbReference>
<dbReference type="GO" id="GO:0015385">
    <property type="term" value="F:sodium:proton antiporter activity"/>
    <property type="evidence" value="ECO:0007669"/>
    <property type="project" value="TreeGrafter"/>
</dbReference>
<dbReference type="GO" id="GO:0006885">
    <property type="term" value="P:regulation of pH"/>
    <property type="evidence" value="ECO:0007669"/>
    <property type="project" value="InterPro"/>
</dbReference>
<dbReference type="Gene3D" id="1.20.1530.10">
    <property type="entry name" value="Na+/H+ antiporter like domain"/>
    <property type="match status" value="1"/>
</dbReference>
<dbReference type="HAMAP" id="MF_01844">
    <property type="entry name" value="NhaA"/>
    <property type="match status" value="1"/>
</dbReference>
<dbReference type="InterPro" id="IPR023171">
    <property type="entry name" value="Na/H_antiporter_dom_sf"/>
</dbReference>
<dbReference type="InterPro" id="IPR004670">
    <property type="entry name" value="NhaA"/>
</dbReference>
<dbReference type="NCBIfam" id="TIGR00773">
    <property type="entry name" value="NhaA"/>
    <property type="match status" value="1"/>
</dbReference>
<dbReference type="PANTHER" id="PTHR30341:SF0">
    <property type="entry name" value="NA(+)_H(+) ANTIPORTER NHAA"/>
    <property type="match status" value="1"/>
</dbReference>
<dbReference type="PANTHER" id="PTHR30341">
    <property type="entry name" value="SODIUM ION/PROTON ANTIPORTER NHAA-RELATED"/>
    <property type="match status" value="1"/>
</dbReference>
<dbReference type="Pfam" id="PF06965">
    <property type="entry name" value="Na_H_antiport_1"/>
    <property type="match status" value="1"/>
</dbReference>
<comment type="function">
    <text evidence="1">Na(+)/H(+) antiporter that extrudes sodium in exchange for external protons.</text>
</comment>
<comment type="catalytic activity">
    <reaction evidence="1">
        <text>Na(+)(in) + 2 H(+)(out) = Na(+)(out) + 2 H(+)(in)</text>
        <dbReference type="Rhea" id="RHEA:29251"/>
        <dbReference type="ChEBI" id="CHEBI:15378"/>
        <dbReference type="ChEBI" id="CHEBI:29101"/>
    </reaction>
    <physiologicalReaction direction="left-to-right" evidence="1">
        <dbReference type="Rhea" id="RHEA:29252"/>
    </physiologicalReaction>
</comment>
<comment type="subcellular location">
    <subcellularLocation>
        <location evidence="1">Cell membrane</location>
        <topology evidence="1">Multi-pass membrane protein</topology>
    </subcellularLocation>
</comment>
<comment type="similarity">
    <text evidence="1">Belongs to the NhaA Na(+)/H(+) (TC 2.A.33) antiporter family.</text>
</comment>
<keyword id="KW-0050">Antiport</keyword>
<keyword id="KW-1003">Cell membrane</keyword>
<keyword id="KW-0406">Ion transport</keyword>
<keyword id="KW-0472">Membrane</keyword>
<keyword id="KW-0614">Plasmid</keyword>
<keyword id="KW-0915">Sodium</keyword>
<keyword id="KW-0739">Sodium transport</keyword>
<keyword id="KW-0812">Transmembrane</keyword>
<keyword id="KW-1133">Transmembrane helix</keyword>
<keyword id="KW-0813">Transport</keyword>
<name>NHAA2_DEIGD</name>
<gene>
    <name evidence="1" type="primary">nhaA2</name>
    <name type="ordered locus">Dgeo_2713</name>
</gene>